<reference key="1">
    <citation type="journal article" date="2004" name="Nature">
        <title>DNA sequence and analysis of human chromosome 9.</title>
        <authorList>
            <person name="Humphray S.J."/>
            <person name="Oliver K."/>
            <person name="Hunt A.R."/>
            <person name="Plumb R.W."/>
            <person name="Loveland J.E."/>
            <person name="Howe K.L."/>
            <person name="Andrews T.D."/>
            <person name="Searle S."/>
            <person name="Hunt S.E."/>
            <person name="Scott C.E."/>
            <person name="Jones M.C."/>
            <person name="Ainscough R."/>
            <person name="Almeida J.P."/>
            <person name="Ambrose K.D."/>
            <person name="Ashwell R.I.S."/>
            <person name="Babbage A.K."/>
            <person name="Babbage S."/>
            <person name="Bagguley C.L."/>
            <person name="Bailey J."/>
            <person name="Banerjee R."/>
            <person name="Barker D.J."/>
            <person name="Barlow K.F."/>
            <person name="Bates K."/>
            <person name="Beasley H."/>
            <person name="Beasley O."/>
            <person name="Bird C.P."/>
            <person name="Bray-Allen S."/>
            <person name="Brown A.J."/>
            <person name="Brown J.Y."/>
            <person name="Burford D."/>
            <person name="Burrill W."/>
            <person name="Burton J."/>
            <person name="Carder C."/>
            <person name="Carter N.P."/>
            <person name="Chapman J.C."/>
            <person name="Chen Y."/>
            <person name="Clarke G."/>
            <person name="Clark S.Y."/>
            <person name="Clee C.M."/>
            <person name="Clegg S."/>
            <person name="Collier R.E."/>
            <person name="Corby N."/>
            <person name="Crosier M."/>
            <person name="Cummings A.T."/>
            <person name="Davies J."/>
            <person name="Dhami P."/>
            <person name="Dunn M."/>
            <person name="Dutta I."/>
            <person name="Dyer L.W."/>
            <person name="Earthrowl M.E."/>
            <person name="Faulkner L."/>
            <person name="Fleming C.J."/>
            <person name="Frankish A."/>
            <person name="Frankland J.A."/>
            <person name="French L."/>
            <person name="Fricker D.G."/>
            <person name="Garner P."/>
            <person name="Garnett J."/>
            <person name="Ghori J."/>
            <person name="Gilbert J.G.R."/>
            <person name="Glison C."/>
            <person name="Grafham D.V."/>
            <person name="Gribble S."/>
            <person name="Griffiths C."/>
            <person name="Griffiths-Jones S."/>
            <person name="Grocock R."/>
            <person name="Guy J."/>
            <person name="Hall R.E."/>
            <person name="Hammond S."/>
            <person name="Harley J.L."/>
            <person name="Harrison E.S.I."/>
            <person name="Hart E.A."/>
            <person name="Heath P.D."/>
            <person name="Henderson C.D."/>
            <person name="Hopkins B.L."/>
            <person name="Howard P.J."/>
            <person name="Howden P.J."/>
            <person name="Huckle E."/>
            <person name="Johnson C."/>
            <person name="Johnson D."/>
            <person name="Joy A.A."/>
            <person name="Kay M."/>
            <person name="Keenan S."/>
            <person name="Kershaw J.K."/>
            <person name="Kimberley A.M."/>
            <person name="King A."/>
            <person name="Knights A."/>
            <person name="Laird G.K."/>
            <person name="Langford C."/>
            <person name="Lawlor S."/>
            <person name="Leongamornlert D.A."/>
            <person name="Leversha M."/>
            <person name="Lloyd C."/>
            <person name="Lloyd D.M."/>
            <person name="Lovell J."/>
            <person name="Martin S."/>
            <person name="Mashreghi-Mohammadi M."/>
            <person name="Matthews L."/>
            <person name="McLaren S."/>
            <person name="McLay K.E."/>
            <person name="McMurray A."/>
            <person name="Milne S."/>
            <person name="Nickerson T."/>
            <person name="Nisbett J."/>
            <person name="Nordsiek G."/>
            <person name="Pearce A.V."/>
            <person name="Peck A.I."/>
            <person name="Porter K.M."/>
            <person name="Pandian R."/>
            <person name="Pelan S."/>
            <person name="Phillimore B."/>
            <person name="Povey S."/>
            <person name="Ramsey Y."/>
            <person name="Rand V."/>
            <person name="Scharfe M."/>
            <person name="Sehra H.K."/>
            <person name="Shownkeen R."/>
            <person name="Sims S.K."/>
            <person name="Skuce C.D."/>
            <person name="Smith M."/>
            <person name="Steward C.A."/>
            <person name="Swarbreck D."/>
            <person name="Sycamore N."/>
            <person name="Tester J."/>
            <person name="Thorpe A."/>
            <person name="Tracey A."/>
            <person name="Tromans A."/>
            <person name="Thomas D.W."/>
            <person name="Wall M."/>
            <person name="Wallis J.M."/>
            <person name="West A.P."/>
            <person name="Whitehead S.L."/>
            <person name="Willey D.L."/>
            <person name="Williams S.A."/>
            <person name="Wilming L."/>
            <person name="Wray P.W."/>
            <person name="Young L."/>
            <person name="Ashurst J.L."/>
            <person name="Coulson A."/>
            <person name="Blocker H."/>
            <person name="Durbin R.M."/>
            <person name="Sulston J.E."/>
            <person name="Hubbard T."/>
            <person name="Jackson M.J."/>
            <person name="Bentley D.R."/>
            <person name="Beck S."/>
            <person name="Rogers J."/>
            <person name="Dunham I."/>
        </authorList>
    </citation>
    <scope>NUCLEOTIDE SEQUENCE [LARGE SCALE GENOMIC DNA]</scope>
</reference>
<reference key="2">
    <citation type="journal article" date="2004" name="Genome Res.">
        <title>The status, quality, and expansion of the NIH full-length cDNA project: the Mammalian Gene Collection (MGC).</title>
        <authorList>
            <consortium name="The MGC Project Team"/>
        </authorList>
    </citation>
    <scope>NUCLEOTIDE SEQUENCE [LARGE SCALE MRNA]</scope>
    <source>
        <tissue>Brain</tissue>
    </source>
</reference>
<reference key="3">
    <citation type="journal article" date="2006" name="Science">
        <title>The consensus coding sequences of human breast and colorectal cancers.</title>
        <authorList>
            <person name="Sjoeblom T."/>
            <person name="Jones S."/>
            <person name="Wood L.D."/>
            <person name="Parsons D.W."/>
            <person name="Lin J."/>
            <person name="Barber T.D."/>
            <person name="Mandelker D."/>
            <person name="Leary R.J."/>
            <person name="Ptak J."/>
            <person name="Silliman N."/>
            <person name="Szabo S."/>
            <person name="Buckhaults P."/>
            <person name="Farrell C."/>
            <person name="Meeh P."/>
            <person name="Markowitz S.D."/>
            <person name="Willis J."/>
            <person name="Dawson D."/>
            <person name="Willson J.K.V."/>
            <person name="Gazdar A.F."/>
            <person name="Hartigan J."/>
            <person name="Wu L."/>
            <person name="Liu C."/>
            <person name="Parmigiani G."/>
            <person name="Park B.H."/>
            <person name="Bachman K.E."/>
            <person name="Papadopoulos N."/>
            <person name="Vogelstein B."/>
            <person name="Kinzler K.W."/>
            <person name="Velculescu V.E."/>
        </authorList>
    </citation>
    <scope>VARIANT [LARGE SCALE ANALYSIS] MET-205</scope>
</reference>
<reference key="4">
    <citation type="journal article" date="2020" name="Nature">
        <title>SLC25A51 is a mammalian mitochondrial NAD+ transporter.</title>
        <authorList>
            <person name="Luongo T.S."/>
            <person name="Eller J.M."/>
            <person name="Lu M.J."/>
            <person name="Niere M."/>
            <person name="Raith F."/>
            <person name="Perry C."/>
            <person name="Bornstein M.R."/>
            <person name="Oliphint P."/>
            <person name="Wang L."/>
            <person name="McReynolds M.R."/>
            <person name="Migaud M.E."/>
            <person name="Rabinowitz J.D."/>
            <person name="Johnson F.B."/>
            <person name="Johnsson K."/>
            <person name="Ziegler M."/>
            <person name="Cambronne X.A."/>
            <person name="Baur J.A."/>
        </authorList>
    </citation>
    <scope>FUNCTION</scope>
    <scope>TRANSPORTER ACTIVITY</scope>
    <scope>SUBCELLULAR LOCATION</scope>
</reference>
<reference key="5">
    <citation type="journal article" date="2020" name="Nat. Commun.">
        <title>Epistasis-driven identification of SLC25A51 as a regulator of human mitochondrial NAD import.</title>
        <authorList>
            <person name="Girardi E."/>
            <person name="Agrimi G."/>
            <person name="Goldmann U."/>
            <person name="Fiume G."/>
            <person name="Lindinger S."/>
            <person name="Sedlyarov V."/>
            <person name="Srndic I."/>
            <person name="Guertl B."/>
            <person name="Agerer B."/>
            <person name="Kartnig F."/>
            <person name="Scarcia P."/>
            <person name="Di Noia M.A."/>
            <person name="Lineiro E."/>
            <person name="Rebsamen M."/>
            <person name="Wiedmer T."/>
            <person name="Bergthaler A."/>
            <person name="Palmieri L."/>
            <person name="Superti-Furga G."/>
        </authorList>
    </citation>
    <scope>FUNCTION</scope>
    <scope>TRANSPORTER ACTIVITY</scope>
</reference>
<reference key="6">
    <citation type="journal article" date="2020" name="Sci. Adv.">
        <title>MCART1/SLC25A51 is required for mitochondrial NAD transport.</title>
        <authorList>
            <person name="Kory N."/>
            <person name="Uit de Bos J."/>
            <person name="van der Rijt S."/>
            <person name="Jankovic N."/>
            <person name="Guera M."/>
            <person name="Arp N."/>
            <person name="Pena I.A."/>
            <person name="Prakash G."/>
            <person name="Chan S.H."/>
            <person name="Kunchok T."/>
            <person name="Lewis C.A."/>
            <person name="Sabatini D.M."/>
        </authorList>
    </citation>
    <scope>FUNCTION</scope>
    <scope>TRANSPORTER ACTIVITY</scope>
    <scope>SUBCELLULAR LOCATION</scope>
    <scope>MUTAGENESIS OF LYS-91 AND ARG-278</scope>
</reference>
<name>S2551_HUMAN</name>
<organism>
    <name type="scientific">Homo sapiens</name>
    <name type="common">Human</name>
    <dbReference type="NCBI Taxonomy" id="9606"/>
    <lineage>
        <taxon>Eukaryota</taxon>
        <taxon>Metazoa</taxon>
        <taxon>Chordata</taxon>
        <taxon>Craniata</taxon>
        <taxon>Vertebrata</taxon>
        <taxon>Euteleostomi</taxon>
        <taxon>Mammalia</taxon>
        <taxon>Eutheria</taxon>
        <taxon>Euarchontoglires</taxon>
        <taxon>Primates</taxon>
        <taxon>Haplorrhini</taxon>
        <taxon>Catarrhini</taxon>
        <taxon>Hominidae</taxon>
        <taxon>Homo</taxon>
    </lineage>
</organism>
<protein>
    <recommendedName>
        <fullName evidence="9">Mitochondrial nicotinamide adenine dinucleotide transporter SLC25A51</fullName>
    </recommendedName>
    <alternativeName>
        <fullName evidence="9">Mitochondrial NAD(+) transporter SLC25A51</fullName>
    </alternativeName>
    <alternativeName>
        <fullName evidence="8">Mitochondrial carrier triple repeat protein 1</fullName>
    </alternativeName>
    <alternativeName>
        <fullName evidence="7">Solute carrier family 25 member 51</fullName>
    </alternativeName>
</protein>
<sequence>MMDSEAHEKRPPILTSSKQDISPHITNVGEMKHYLCGCCAAFNNVAITFPIQKVLFRQQLYGIKTRDAILQLRRDGFRNLYRGILPPLMQKTTTLALMFGLYEDLSCLLHKHVSAPEFATSGVAAVLAGTTEAIFTPLERVQTLLQDHKHHDKFTNTYQAFKALKCHGIGEYYRGLVPILFRNGLSNVLFFGLRGPIKEHLPTATTHSAHLVNDFICGGLLGAMLGFLFFPINVVKTRIQSQIGGEFQSFPKVFQKIWLERDRKLINLFRGAHLNYHRSLISWGIINATYEFLLKVI</sequence>
<comment type="function">
    <text evidence="4 6">Mitochondrial membrane carrier protein that mediates the import of NAD(+) into mitochondria (PubMed:32906142, PubMed:33087354, PubMed:33262325). Mitochondrial NAD(+) is required for glycolysis and mitochondrial respiration (PubMed:32906142, PubMed:33087354, PubMed:33262325). Compared to SLC25A52, SLC25A51-mediated transport is essential for the import of NAD(+) in mitochondria (PubMed:32906142). The transport mechanism, uniport or antiport, its electrogenicity and substrate selectivity, remain to be elucidated.</text>
</comment>
<comment type="catalytic activity">
    <reaction evidence="10 11 12">
        <text>NAD(+)(in) = NAD(+)(out)</text>
        <dbReference type="Rhea" id="RHEA:65408"/>
        <dbReference type="ChEBI" id="CHEBI:57540"/>
    </reaction>
</comment>
<comment type="subcellular location">
    <subcellularLocation>
        <location evidence="5 10">Mitochondrion inner membrane</location>
        <topology evidence="1">Multi-pass membrane protein</topology>
    </subcellularLocation>
</comment>
<comment type="similarity">
    <text evidence="9">Belongs to the mitochondrial carrier (TC 2.A.29) family.</text>
</comment>
<gene>
    <name evidence="7 13" type="primary">SLC25A51</name>
    <name evidence="8 13" type="synonym">MCART1</name>
</gene>
<proteinExistence type="evidence at protein level"/>
<dbReference type="EMBL" id="AL138752">
    <property type="status" value="NOT_ANNOTATED_CDS"/>
    <property type="molecule type" value="Genomic_DNA"/>
</dbReference>
<dbReference type="EMBL" id="BC008500">
    <property type="protein sequence ID" value="AAH08500.1"/>
    <property type="molecule type" value="mRNA"/>
</dbReference>
<dbReference type="CCDS" id="CCDS6614.1"/>
<dbReference type="RefSeq" id="NP_219480.1">
    <property type="nucleotide sequence ID" value="NM_033412.4"/>
</dbReference>
<dbReference type="SMR" id="Q9H1U9"/>
<dbReference type="BioGRID" id="124902">
    <property type="interactions" value="151"/>
</dbReference>
<dbReference type="FunCoup" id="Q9H1U9">
    <property type="interactions" value="2063"/>
</dbReference>
<dbReference type="IntAct" id="Q9H1U9">
    <property type="interactions" value="21"/>
</dbReference>
<dbReference type="STRING" id="9606.ENSP00000366945"/>
<dbReference type="TCDB" id="2.A.29.2.14">
    <property type="family name" value="the mitochondrial carrier (mc) family"/>
</dbReference>
<dbReference type="iPTMnet" id="Q9H1U9"/>
<dbReference type="PhosphoSitePlus" id="Q9H1U9"/>
<dbReference type="BioMuta" id="SLC25A51"/>
<dbReference type="DMDM" id="38605048"/>
<dbReference type="jPOST" id="Q9H1U9"/>
<dbReference type="MassIVE" id="Q9H1U9"/>
<dbReference type="PaxDb" id="9606-ENSP00000366945"/>
<dbReference type="PeptideAtlas" id="Q9H1U9"/>
<dbReference type="ProteomicsDB" id="80448"/>
<dbReference type="Pumba" id="Q9H1U9"/>
<dbReference type="Antibodypedia" id="26329">
    <property type="antibodies" value="96 antibodies from 18 providers"/>
</dbReference>
<dbReference type="DNASU" id="92014"/>
<dbReference type="Ensembl" id="ENST00000242275.7">
    <property type="protein sequence ID" value="ENSP00000242275.6"/>
    <property type="gene ID" value="ENSG00000122696.14"/>
</dbReference>
<dbReference type="Ensembl" id="ENST00000377716.6">
    <property type="protein sequence ID" value="ENSP00000366945.2"/>
    <property type="gene ID" value="ENSG00000122696.14"/>
</dbReference>
<dbReference type="GeneID" id="92014"/>
<dbReference type="KEGG" id="hsa:92014"/>
<dbReference type="MANE-Select" id="ENST00000242275.7">
    <property type="protein sequence ID" value="ENSP00000242275.6"/>
    <property type="RefSeq nucleotide sequence ID" value="NM_033412.4"/>
    <property type="RefSeq protein sequence ID" value="NP_219480.1"/>
</dbReference>
<dbReference type="UCSC" id="uc004aav.3">
    <property type="organism name" value="human"/>
</dbReference>
<dbReference type="AGR" id="HGNC:23323"/>
<dbReference type="CTD" id="92014"/>
<dbReference type="DisGeNET" id="92014"/>
<dbReference type="GeneCards" id="SLC25A51"/>
<dbReference type="HGNC" id="HGNC:23323">
    <property type="gene designation" value="SLC25A51"/>
</dbReference>
<dbReference type="HPA" id="ENSG00000122696">
    <property type="expression patterns" value="Low tissue specificity"/>
</dbReference>
<dbReference type="MIM" id="619153">
    <property type="type" value="gene"/>
</dbReference>
<dbReference type="neXtProt" id="NX_Q9H1U9"/>
<dbReference type="OpenTargets" id="ENSG00000122696"/>
<dbReference type="PharmGKB" id="PA134888553"/>
<dbReference type="VEuPathDB" id="HostDB:ENSG00000122696"/>
<dbReference type="eggNOG" id="KOG1519">
    <property type="taxonomic scope" value="Eukaryota"/>
</dbReference>
<dbReference type="GeneTree" id="ENSGT00940000155622"/>
<dbReference type="HOGENOM" id="CLU_061821_0_0_1"/>
<dbReference type="InParanoid" id="Q9H1U9"/>
<dbReference type="OMA" id="RFANTYQ"/>
<dbReference type="OrthoDB" id="2139348at2759"/>
<dbReference type="PAN-GO" id="Q9H1U9">
    <property type="GO annotations" value="3 GO annotations based on evolutionary models"/>
</dbReference>
<dbReference type="PhylomeDB" id="Q9H1U9"/>
<dbReference type="TreeFam" id="TF314192"/>
<dbReference type="PathwayCommons" id="Q9H1U9"/>
<dbReference type="SignaLink" id="Q9H1U9"/>
<dbReference type="BioGRID-ORCS" id="92014">
    <property type="hits" value="46 hits in 1060 CRISPR screens"/>
</dbReference>
<dbReference type="ChiTaRS" id="SLC25A51">
    <property type="organism name" value="human"/>
</dbReference>
<dbReference type="GenomeRNAi" id="92014"/>
<dbReference type="Pharos" id="Q9H1U9">
    <property type="development level" value="Tbio"/>
</dbReference>
<dbReference type="PRO" id="PR:Q9H1U9"/>
<dbReference type="Proteomes" id="UP000005640">
    <property type="component" value="Chromosome 9"/>
</dbReference>
<dbReference type="RNAct" id="Q9H1U9">
    <property type="molecule type" value="protein"/>
</dbReference>
<dbReference type="Bgee" id="ENSG00000122696">
    <property type="expression patterns" value="Expressed in primordial germ cell in gonad and 124 other cell types or tissues"/>
</dbReference>
<dbReference type="GO" id="GO:0005743">
    <property type="term" value="C:mitochondrial inner membrane"/>
    <property type="evidence" value="ECO:0000314"/>
    <property type="project" value="UniProtKB"/>
</dbReference>
<dbReference type="GO" id="GO:0005739">
    <property type="term" value="C:mitochondrion"/>
    <property type="evidence" value="ECO:0000314"/>
    <property type="project" value="UniProtKB"/>
</dbReference>
<dbReference type="GO" id="GO:0051724">
    <property type="term" value="F:NAD transmembrane transporter activity"/>
    <property type="evidence" value="ECO:0000314"/>
    <property type="project" value="UniProtKB"/>
</dbReference>
<dbReference type="GO" id="GO:0019646">
    <property type="term" value="P:aerobic electron transport chain"/>
    <property type="evidence" value="ECO:0000315"/>
    <property type="project" value="UniProtKB"/>
</dbReference>
<dbReference type="GO" id="GO:1990549">
    <property type="term" value="P:mitochondrial NAD transmembrane transport"/>
    <property type="evidence" value="ECO:0000314"/>
    <property type="project" value="UniProtKB"/>
</dbReference>
<dbReference type="Gene3D" id="1.50.40.10">
    <property type="entry name" value="Mitochondrial carrier domain"/>
    <property type="match status" value="1"/>
</dbReference>
<dbReference type="InterPro" id="IPR052465">
    <property type="entry name" value="Mito_NAD+_Carrier"/>
</dbReference>
<dbReference type="InterPro" id="IPR018108">
    <property type="entry name" value="Mitochondrial_sb/sol_carrier"/>
</dbReference>
<dbReference type="InterPro" id="IPR023395">
    <property type="entry name" value="Mt_carrier_dom_sf"/>
</dbReference>
<dbReference type="PANTHER" id="PTHR46131:SF2">
    <property type="entry name" value="MITOCHONDRIAL NICOTINAMIDE ADENINE DINUCLEOTIDE TRANSPORTER SLC25A51-RELATED"/>
    <property type="match status" value="1"/>
</dbReference>
<dbReference type="PANTHER" id="PTHR46131">
    <property type="entry name" value="SD08549P"/>
    <property type="match status" value="1"/>
</dbReference>
<dbReference type="Pfam" id="PF00153">
    <property type="entry name" value="Mito_carr"/>
    <property type="match status" value="3"/>
</dbReference>
<dbReference type="SUPFAM" id="SSF103506">
    <property type="entry name" value="Mitochondrial carrier"/>
    <property type="match status" value="1"/>
</dbReference>
<dbReference type="PROSITE" id="PS50920">
    <property type="entry name" value="SOLCAR"/>
    <property type="match status" value="3"/>
</dbReference>
<feature type="chain" id="PRO_0000090711" description="Mitochondrial nicotinamide adenine dinucleotide transporter SLC25A51">
    <location>
        <begin position="1"/>
        <end position="297"/>
    </location>
</feature>
<feature type="transmembrane region" description="Helical; Name=1" evidence="1">
    <location>
        <begin position="36"/>
        <end position="56"/>
    </location>
</feature>
<feature type="transmembrane region" description="Helical; Name=2" evidence="1">
    <location>
        <begin position="85"/>
        <end position="105"/>
    </location>
</feature>
<feature type="transmembrane region" description="Helical; Name=3" evidence="1">
    <location>
        <begin position="116"/>
        <end position="135"/>
    </location>
</feature>
<feature type="transmembrane region" description="Helical; Name=4" evidence="1">
    <location>
        <begin position="179"/>
        <end position="199"/>
    </location>
</feature>
<feature type="transmembrane region" description="Helical; Name=5" evidence="1">
    <location>
        <begin position="215"/>
        <end position="235"/>
    </location>
</feature>
<feature type="transmembrane region" description="Helical; Name=6" evidence="1">
    <location>
        <begin position="268"/>
        <end position="289"/>
    </location>
</feature>
<feature type="repeat" description="Solcar 1" evidence="1">
    <location>
        <begin position="28"/>
        <end position="108"/>
    </location>
</feature>
<feature type="repeat" description="Solcar 2" evidence="1">
    <location>
        <begin position="116"/>
        <end position="200"/>
    </location>
</feature>
<feature type="repeat" description="Solcar 3" evidence="1">
    <location>
        <begin position="213"/>
        <end position="296"/>
    </location>
</feature>
<feature type="region of interest" description="Disordered" evidence="2">
    <location>
        <begin position="1"/>
        <end position="20"/>
    </location>
</feature>
<feature type="compositionally biased region" description="Basic and acidic residues" evidence="2">
    <location>
        <begin position="1"/>
        <end position="11"/>
    </location>
</feature>
<feature type="sequence variant" id="VAR_036333" description="In a breast cancer sample; somatic mutation; dbSNP:rs780199922." evidence="3">
    <original>T</original>
    <variation>M</variation>
    <location>
        <position position="205"/>
    </location>
</feature>
<feature type="mutagenesis site" description="Impaired import of NAD(+) into mitochondria." evidence="5">
    <original>K</original>
    <variation>A</variation>
    <location>
        <position position="91"/>
    </location>
</feature>
<feature type="mutagenesis site" description="Impaired import of NAD(+) into mitochondria." evidence="5">
    <original>R</original>
    <variation>A</variation>
    <location>
        <position position="278"/>
    </location>
</feature>
<accession>Q9H1U9</accession>
<evidence type="ECO:0000255" key="1"/>
<evidence type="ECO:0000256" key="2">
    <source>
        <dbReference type="SAM" id="MobiDB-lite"/>
    </source>
</evidence>
<evidence type="ECO:0000269" key="3">
    <source>
    </source>
</evidence>
<evidence type="ECO:0000269" key="4">
    <source>
    </source>
</evidence>
<evidence type="ECO:0000269" key="5">
    <source>
    </source>
</evidence>
<evidence type="ECO:0000269" key="6">
    <source>
    </source>
</evidence>
<evidence type="ECO:0000303" key="7">
    <source>
    </source>
</evidence>
<evidence type="ECO:0000303" key="8">
    <source>
    </source>
</evidence>
<evidence type="ECO:0000305" key="9"/>
<evidence type="ECO:0000305" key="10">
    <source>
    </source>
</evidence>
<evidence type="ECO:0000305" key="11">
    <source>
    </source>
</evidence>
<evidence type="ECO:0000305" key="12">
    <source>
    </source>
</evidence>
<evidence type="ECO:0000312" key="13">
    <source>
        <dbReference type="HGNC" id="HGNC:23323"/>
    </source>
</evidence>
<keyword id="KW-0472">Membrane</keyword>
<keyword id="KW-0496">Mitochondrion</keyword>
<keyword id="KW-0999">Mitochondrion inner membrane</keyword>
<keyword id="KW-1267">Proteomics identification</keyword>
<keyword id="KW-1185">Reference proteome</keyword>
<keyword id="KW-0677">Repeat</keyword>
<keyword id="KW-0812">Transmembrane</keyword>
<keyword id="KW-1133">Transmembrane helix</keyword>
<keyword id="KW-0813">Transport</keyword>